<protein>
    <recommendedName>
        <fullName evidence="1">Small ribosomal subunit protein uS12</fullName>
    </recommendedName>
    <alternativeName>
        <fullName evidence="2">30S ribosomal protein S12</fullName>
    </alternativeName>
</protein>
<dbReference type="EMBL" id="AE000666">
    <property type="protein sequence ID" value="AAB85546.1"/>
    <property type="molecule type" value="Genomic_DNA"/>
</dbReference>
<dbReference type="PIR" id="C69007">
    <property type="entry name" value="C69007"/>
</dbReference>
<dbReference type="RefSeq" id="WP_010876681.1">
    <property type="nucleotide sequence ID" value="NC_000916.1"/>
</dbReference>
<dbReference type="SMR" id="O27129"/>
<dbReference type="FunCoup" id="O27129">
    <property type="interactions" value="157"/>
</dbReference>
<dbReference type="STRING" id="187420.MTH_1055"/>
<dbReference type="PaxDb" id="187420-MTH_1055"/>
<dbReference type="EnsemblBacteria" id="AAB85546">
    <property type="protein sequence ID" value="AAB85546"/>
    <property type="gene ID" value="MTH_1055"/>
</dbReference>
<dbReference type="GeneID" id="1471463"/>
<dbReference type="KEGG" id="mth:MTH_1055"/>
<dbReference type="PATRIC" id="fig|187420.15.peg.1034"/>
<dbReference type="HOGENOM" id="CLU_115574_0_1_2"/>
<dbReference type="InParanoid" id="O27129"/>
<dbReference type="Proteomes" id="UP000005223">
    <property type="component" value="Chromosome"/>
</dbReference>
<dbReference type="GO" id="GO:0015935">
    <property type="term" value="C:small ribosomal subunit"/>
    <property type="evidence" value="ECO:0007669"/>
    <property type="project" value="InterPro"/>
</dbReference>
<dbReference type="GO" id="GO:0019843">
    <property type="term" value="F:rRNA binding"/>
    <property type="evidence" value="ECO:0007669"/>
    <property type="project" value="UniProtKB-UniRule"/>
</dbReference>
<dbReference type="GO" id="GO:0003735">
    <property type="term" value="F:structural constituent of ribosome"/>
    <property type="evidence" value="ECO:0007669"/>
    <property type="project" value="InterPro"/>
</dbReference>
<dbReference type="GO" id="GO:0006412">
    <property type="term" value="P:translation"/>
    <property type="evidence" value="ECO:0007669"/>
    <property type="project" value="UniProtKB-UniRule"/>
</dbReference>
<dbReference type="CDD" id="cd03367">
    <property type="entry name" value="Ribosomal_S23"/>
    <property type="match status" value="1"/>
</dbReference>
<dbReference type="FunFam" id="2.40.50.140:FF:000007">
    <property type="entry name" value="40S ribosomal protein S23"/>
    <property type="match status" value="1"/>
</dbReference>
<dbReference type="Gene3D" id="2.40.50.140">
    <property type="entry name" value="Nucleic acid-binding proteins"/>
    <property type="match status" value="1"/>
</dbReference>
<dbReference type="HAMAP" id="MF_00403_A">
    <property type="entry name" value="Ribosomal_uS12_A"/>
    <property type="match status" value="1"/>
</dbReference>
<dbReference type="InterPro" id="IPR012340">
    <property type="entry name" value="NA-bd_OB-fold"/>
</dbReference>
<dbReference type="InterPro" id="IPR006032">
    <property type="entry name" value="Ribosomal_uS12"/>
</dbReference>
<dbReference type="InterPro" id="IPR022863">
    <property type="entry name" value="Ribosomal_uS12_arc"/>
</dbReference>
<dbReference type="InterPro" id="IPR005680">
    <property type="entry name" value="Ribosomal_uS12_euk/arc"/>
</dbReference>
<dbReference type="NCBIfam" id="NF003254">
    <property type="entry name" value="PRK04211.1"/>
    <property type="match status" value="1"/>
</dbReference>
<dbReference type="NCBIfam" id="TIGR00982">
    <property type="entry name" value="uS12_E_A"/>
    <property type="match status" value="1"/>
</dbReference>
<dbReference type="PANTHER" id="PTHR11652">
    <property type="entry name" value="30S RIBOSOMAL PROTEIN S12 FAMILY MEMBER"/>
    <property type="match status" value="1"/>
</dbReference>
<dbReference type="Pfam" id="PF00164">
    <property type="entry name" value="Ribosom_S12_S23"/>
    <property type="match status" value="1"/>
</dbReference>
<dbReference type="PIRSF" id="PIRSF002133">
    <property type="entry name" value="Ribosomal_S12/S23"/>
    <property type="match status" value="1"/>
</dbReference>
<dbReference type="SUPFAM" id="SSF50249">
    <property type="entry name" value="Nucleic acid-binding proteins"/>
    <property type="match status" value="1"/>
</dbReference>
<dbReference type="PROSITE" id="PS00055">
    <property type="entry name" value="RIBOSOMAL_S12"/>
    <property type="match status" value="1"/>
</dbReference>
<organism>
    <name type="scientific">Methanothermobacter thermautotrophicus (strain ATCC 29096 / DSM 1053 / JCM 10044 / NBRC 100330 / Delta H)</name>
    <name type="common">Methanobacterium thermoautotrophicum</name>
    <dbReference type="NCBI Taxonomy" id="187420"/>
    <lineage>
        <taxon>Archaea</taxon>
        <taxon>Methanobacteriati</taxon>
        <taxon>Methanobacteriota</taxon>
        <taxon>Methanomada group</taxon>
        <taxon>Methanobacteria</taxon>
        <taxon>Methanobacteriales</taxon>
        <taxon>Methanobacteriaceae</taxon>
        <taxon>Methanothermobacter</taxon>
    </lineage>
</organism>
<sequence length="141" mass="15568">MPGLFAAKKLKSKRQKFKWKDTHYKRRSLRLDVKADPLEGAPQARGIVIEKVGIEAKQPNSAIRKCVRVQLIKNGKQITAFAPGDGAIGFIDEHDEVVVEGIGGPSGRSMGDIPGVRWKVTKVNNVSLQEMVKGKIEKPVR</sequence>
<evidence type="ECO:0000255" key="1">
    <source>
        <dbReference type="HAMAP-Rule" id="MF_00403"/>
    </source>
</evidence>
<evidence type="ECO:0000305" key="2"/>
<keyword id="KW-1185">Reference proteome</keyword>
<keyword id="KW-0687">Ribonucleoprotein</keyword>
<keyword id="KW-0689">Ribosomal protein</keyword>
<keyword id="KW-0694">RNA-binding</keyword>
<keyword id="KW-0699">rRNA-binding</keyword>
<proteinExistence type="inferred from homology"/>
<name>RS12_METTH</name>
<reference key="1">
    <citation type="journal article" date="1997" name="J. Bacteriol.">
        <title>Complete genome sequence of Methanobacterium thermoautotrophicum deltaH: functional analysis and comparative genomics.</title>
        <authorList>
            <person name="Smith D.R."/>
            <person name="Doucette-Stamm L.A."/>
            <person name="Deloughery C."/>
            <person name="Lee H.-M."/>
            <person name="Dubois J."/>
            <person name="Aldredge T."/>
            <person name="Bashirzadeh R."/>
            <person name="Blakely D."/>
            <person name="Cook R."/>
            <person name="Gilbert K."/>
            <person name="Harrison D."/>
            <person name="Hoang L."/>
            <person name="Keagle P."/>
            <person name="Lumm W."/>
            <person name="Pothier B."/>
            <person name="Qiu D."/>
            <person name="Spadafora R."/>
            <person name="Vicare R."/>
            <person name="Wang Y."/>
            <person name="Wierzbowski J."/>
            <person name="Gibson R."/>
            <person name="Jiwani N."/>
            <person name="Caruso A."/>
            <person name="Bush D."/>
            <person name="Safer H."/>
            <person name="Patwell D."/>
            <person name="Prabhakar S."/>
            <person name="McDougall S."/>
            <person name="Shimer G."/>
            <person name="Goyal A."/>
            <person name="Pietrovski S."/>
            <person name="Church G.M."/>
            <person name="Daniels C.J."/>
            <person name="Mao J.-I."/>
            <person name="Rice P."/>
            <person name="Noelling J."/>
            <person name="Reeve J.N."/>
        </authorList>
    </citation>
    <scope>NUCLEOTIDE SEQUENCE [LARGE SCALE GENOMIC DNA]</scope>
    <source>
        <strain>ATCC 29096 / DSM 1053 / JCM 10044 / NBRC 100330 / Delta H</strain>
    </source>
</reference>
<feature type="chain" id="PRO_0000146374" description="Small ribosomal subunit protein uS12">
    <location>
        <begin position="1"/>
        <end position="141"/>
    </location>
</feature>
<gene>
    <name evidence="1" type="primary">rps12</name>
    <name type="ordered locus">MTH_1055</name>
</gene>
<comment type="function">
    <text evidence="1">With S4 and S5 plays an important role in translational accuracy. Located at the interface of the 30S and 50S subunits.</text>
</comment>
<comment type="subunit">
    <text evidence="1">Part of the 30S ribosomal subunit.</text>
</comment>
<comment type="similarity">
    <text evidence="1">Belongs to the universal ribosomal protein uS12 family.</text>
</comment>
<accession>O27129</accession>